<evidence type="ECO:0000255" key="1">
    <source>
        <dbReference type="HAMAP-Rule" id="MF_01623"/>
    </source>
</evidence>
<evidence type="ECO:0000256" key="2">
    <source>
        <dbReference type="SAM" id="MobiDB-lite"/>
    </source>
</evidence>
<feature type="signal peptide" evidence="1">
    <location>
        <begin position="1"/>
        <end position="19"/>
    </location>
</feature>
<feature type="chain" id="PRO_5000314193" description="Penicillin-insensitive murein endopeptidase">
    <location>
        <begin position="20"/>
        <end position="274"/>
    </location>
</feature>
<feature type="region of interest" description="Disordered" evidence="2">
    <location>
        <begin position="227"/>
        <end position="274"/>
    </location>
</feature>
<feature type="binding site" evidence="1">
    <location>
        <position position="110"/>
    </location>
    <ligand>
        <name>Zn(2+)</name>
        <dbReference type="ChEBI" id="CHEBI:29105"/>
        <label>1</label>
    </ligand>
</feature>
<feature type="binding site" evidence="1">
    <location>
        <position position="113"/>
    </location>
    <ligand>
        <name>Zn(2+)</name>
        <dbReference type="ChEBI" id="CHEBI:29105"/>
        <label>1</label>
    </ligand>
</feature>
<feature type="binding site" evidence="1">
    <location>
        <position position="120"/>
    </location>
    <ligand>
        <name>Zn(2+)</name>
        <dbReference type="ChEBI" id="CHEBI:29105"/>
        <label>1</label>
    </ligand>
</feature>
<feature type="binding site" evidence="1">
    <location>
        <position position="147"/>
    </location>
    <ligand>
        <name>Zn(2+)</name>
        <dbReference type="ChEBI" id="CHEBI:29105"/>
        <label>2</label>
    </ligand>
</feature>
<feature type="binding site" evidence="1">
    <location>
        <position position="150"/>
    </location>
    <ligand>
        <name>Zn(2+)</name>
        <dbReference type="ChEBI" id="CHEBI:29105"/>
        <label>2</label>
    </ligand>
</feature>
<feature type="binding site" evidence="1">
    <location>
        <position position="211"/>
    </location>
    <ligand>
        <name>Zn(2+)</name>
        <dbReference type="ChEBI" id="CHEBI:29105"/>
        <label>1</label>
    </ligand>
</feature>
<feature type="disulfide bond" evidence="1">
    <location>
        <begin position="44"/>
        <end position="265"/>
    </location>
</feature>
<feature type="disulfide bond" evidence="1">
    <location>
        <begin position="187"/>
        <end position="235"/>
    </location>
</feature>
<feature type="disulfide bond" evidence="1">
    <location>
        <begin position="216"/>
        <end position="223"/>
    </location>
</feature>
<comment type="function">
    <text evidence="1">Murein endopeptidase that cleaves the D-alanyl-meso-2,6-diamino-pimelyl amide bond that connects peptidoglycan strands. Likely plays a role in the removal of murein from the sacculus.</text>
</comment>
<comment type="cofactor">
    <cofactor evidence="1">
        <name>Zn(2+)</name>
        <dbReference type="ChEBI" id="CHEBI:29105"/>
    </cofactor>
    <text evidence="1">Binds 2 Zn(2+) ions per subunit. Zn(2+) ion 1 is bound in the active site. Zn(2+) ion 2 is bound at the dimer interface by residues from both subunits.</text>
</comment>
<comment type="subunit">
    <text evidence="1">Dimer.</text>
</comment>
<comment type="subcellular location">
    <subcellularLocation>
        <location evidence="1">Periplasm</location>
    </subcellularLocation>
</comment>
<comment type="similarity">
    <text evidence="1">Belongs to the peptidase M74 family.</text>
</comment>
<gene>
    <name evidence="1" type="primary">mepA</name>
    <name type="ordered locus">EcolC_1324</name>
</gene>
<name>MEPA_ECOLC</name>
<organism>
    <name type="scientific">Escherichia coli (strain ATCC 8739 / DSM 1576 / NBRC 3972 / NCIMB 8545 / WDCM 00012 / Crooks)</name>
    <dbReference type="NCBI Taxonomy" id="481805"/>
    <lineage>
        <taxon>Bacteria</taxon>
        <taxon>Pseudomonadati</taxon>
        <taxon>Pseudomonadota</taxon>
        <taxon>Gammaproteobacteria</taxon>
        <taxon>Enterobacterales</taxon>
        <taxon>Enterobacteriaceae</taxon>
        <taxon>Escherichia</taxon>
    </lineage>
</organism>
<keyword id="KW-1015">Disulfide bond</keyword>
<keyword id="KW-0378">Hydrolase</keyword>
<keyword id="KW-0479">Metal-binding</keyword>
<keyword id="KW-0482">Metalloprotease</keyword>
<keyword id="KW-0574">Periplasm</keyword>
<keyword id="KW-0645">Protease</keyword>
<keyword id="KW-0732">Signal</keyword>
<keyword id="KW-0862">Zinc</keyword>
<proteinExistence type="inferred from homology"/>
<sequence length="274" mass="30147">MNKTAIALLALLASSASLAATPWQKITQPVPGSAQSIGSFSNGCIVGADTLPIQSEHYQVMRTDQRRYFGHPDLVMFIQRLSSQVSNLGMGTVLIGDMGMPAGGRFNGGHASHQTGLDVDIFLQLPKTRWTSAQLLRPQALDLVSRDGKHVVSTLWKPEIFSLIKLAAQDKDVTRIFVNPAIKQQLCLDAGTDRDWLRKVRPWFQHRAHMHVRLRCPADSLECEDQPLPPPGDGCGAELQSWFEPPKPGTTKPEKKTPPPLPPSCQALLDEHVI</sequence>
<protein>
    <recommendedName>
        <fullName evidence="1">Penicillin-insensitive murein endopeptidase</fullName>
        <ecNumber evidence="1">3.4.24.-</ecNumber>
    </recommendedName>
    <alternativeName>
        <fullName evidence="1">D-alanyl-D-alanine-endopeptidase</fullName>
        <shortName evidence="1">DD-endopeptidase</shortName>
    </alternativeName>
</protein>
<accession>B1IXB7</accession>
<reference key="1">
    <citation type="submission" date="2008-02" db="EMBL/GenBank/DDBJ databases">
        <title>Complete sequence of Escherichia coli C str. ATCC 8739.</title>
        <authorList>
            <person name="Copeland A."/>
            <person name="Lucas S."/>
            <person name="Lapidus A."/>
            <person name="Glavina del Rio T."/>
            <person name="Dalin E."/>
            <person name="Tice H."/>
            <person name="Bruce D."/>
            <person name="Goodwin L."/>
            <person name="Pitluck S."/>
            <person name="Kiss H."/>
            <person name="Brettin T."/>
            <person name="Detter J.C."/>
            <person name="Han C."/>
            <person name="Kuske C.R."/>
            <person name="Schmutz J."/>
            <person name="Larimer F."/>
            <person name="Land M."/>
            <person name="Hauser L."/>
            <person name="Kyrpides N."/>
            <person name="Mikhailova N."/>
            <person name="Ingram L."/>
            <person name="Richardson P."/>
        </authorList>
    </citation>
    <scope>NUCLEOTIDE SEQUENCE [LARGE SCALE GENOMIC DNA]</scope>
    <source>
        <strain>ATCC 8739 / DSM 1576 / NBRC 3972 / NCIMB 8545 / WDCM 00012 / Crooks</strain>
    </source>
</reference>
<dbReference type="EC" id="3.4.24.-" evidence="1"/>
<dbReference type="EMBL" id="CP000946">
    <property type="protein sequence ID" value="ACA76990.1"/>
    <property type="molecule type" value="Genomic_DNA"/>
</dbReference>
<dbReference type="RefSeq" id="WP_001043821.1">
    <property type="nucleotide sequence ID" value="NZ_MTFT01000028.1"/>
</dbReference>
<dbReference type="SMR" id="B1IXB7"/>
<dbReference type="MEROPS" id="M74.001"/>
<dbReference type="GeneID" id="75202589"/>
<dbReference type="KEGG" id="ecl:EcolC_1324"/>
<dbReference type="HOGENOM" id="CLU_052496_0_0_6"/>
<dbReference type="GO" id="GO:0030288">
    <property type="term" value="C:outer membrane-bounded periplasmic space"/>
    <property type="evidence" value="ECO:0007669"/>
    <property type="project" value="InterPro"/>
</dbReference>
<dbReference type="GO" id="GO:0046872">
    <property type="term" value="F:metal ion binding"/>
    <property type="evidence" value="ECO:0007669"/>
    <property type="project" value="UniProtKB-KW"/>
</dbReference>
<dbReference type="GO" id="GO:0004222">
    <property type="term" value="F:metalloendopeptidase activity"/>
    <property type="evidence" value="ECO:0007669"/>
    <property type="project" value="UniProtKB-UniRule"/>
</dbReference>
<dbReference type="GO" id="GO:0004252">
    <property type="term" value="F:serine-type endopeptidase activity"/>
    <property type="evidence" value="ECO:0007669"/>
    <property type="project" value="InterPro"/>
</dbReference>
<dbReference type="GO" id="GO:0000270">
    <property type="term" value="P:peptidoglycan metabolic process"/>
    <property type="evidence" value="ECO:0007669"/>
    <property type="project" value="UniProtKB-UniRule"/>
</dbReference>
<dbReference type="GO" id="GO:0006508">
    <property type="term" value="P:proteolysis"/>
    <property type="evidence" value="ECO:0007669"/>
    <property type="project" value="UniProtKB-KW"/>
</dbReference>
<dbReference type="FunFam" id="3.30.1380.10:FF:000002">
    <property type="entry name" value="Penicillin-insensitive murein endopeptidase"/>
    <property type="match status" value="1"/>
</dbReference>
<dbReference type="Gene3D" id="3.30.1380.10">
    <property type="match status" value="1"/>
</dbReference>
<dbReference type="HAMAP" id="MF_01623">
    <property type="entry name" value="MepA"/>
    <property type="match status" value="1"/>
</dbReference>
<dbReference type="InterPro" id="IPR009045">
    <property type="entry name" value="Hedgehog_sig/DD-Pept_Zn-bd_sf"/>
</dbReference>
<dbReference type="InterPro" id="IPR005073">
    <property type="entry name" value="Peptidase_M74"/>
</dbReference>
<dbReference type="NCBIfam" id="NF006947">
    <property type="entry name" value="PRK09429.1"/>
    <property type="match status" value="1"/>
</dbReference>
<dbReference type="Pfam" id="PF03411">
    <property type="entry name" value="Peptidase_M74"/>
    <property type="match status" value="1"/>
</dbReference>
<dbReference type="PIRSF" id="PIRSF018455">
    <property type="entry name" value="MepA"/>
    <property type="match status" value="1"/>
</dbReference>
<dbReference type="SUPFAM" id="SSF55166">
    <property type="entry name" value="Hedgehog/DD-peptidase"/>
    <property type="match status" value="1"/>
</dbReference>